<protein>
    <recommendedName>
        <fullName evidence="1">Nucleotide-binding protein Daci_4781</fullName>
    </recommendedName>
</protein>
<comment type="function">
    <text evidence="1">Nucleotide-binding protein.</text>
</comment>
<comment type="similarity">
    <text evidence="1">Belongs to the YajQ family.</text>
</comment>
<accession>A9BM65</accession>
<reference key="1">
    <citation type="submission" date="2007-11" db="EMBL/GenBank/DDBJ databases">
        <title>Complete sequence of Delftia acidovorans DSM 14801 / SPH-1.</title>
        <authorList>
            <person name="Copeland A."/>
            <person name="Lucas S."/>
            <person name="Lapidus A."/>
            <person name="Barry K."/>
            <person name="Glavina del Rio T."/>
            <person name="Dalin E."/>
            <person name="Tice H."/>
            <person name="Pitluck S."/>
            <person name="Lowry S."/>
            <person name="Clum A."/>
            <person name="Schmutz J."/>
            <person name="Larimer F."/>
            <person name="Land M."/>
            <person name="Hauser L."/>
            <person name="Kyrpides N."/>
            <person name="Kim E."/>
            <person name="Schleheck D."/>
            <person name="Richardson P."/>
        </authorList>
    </citation>
    <scope>NUCLEOTIDE SEQUENCE [LARGE SCALE GENOMIC DNA]</scope>
    <source>
        <strain>DSM 14801 / SPH-1</strain>
    </source>
</reference>
<keyword id="KW-0547">Nucleotide-binding</keyword>
<keyword id="KW-1185">Reference proteome</keyword>
<gene>
    <name type="ordered locus">Daci_4781</name>
</gene>
<name>Y4781_DELAS</name>
<organism>
    <name type="scientific">Delftia acidovorans (strain DSM 14801 / SPH-1)</name>
    <dbReference type="NCBI Taxonomy" id="398578"/>
    <lineage>
        <taxon>Bacteria</taxon>
        <taxon>Pseudomonadati</taxon>
        <taxon>Pseudomonadota</taxon>
        <taxon>Betaproteobacteria</taxon>
        <taxon>Burkholderiales</taxon>
        <taxon>Comamonadaceae</taxon>
        <taxon>Delftia</taxon>
    </lineage>
</organism>
<evidence type="ECO:0000255" key="1">
    <source>
        <dbReference type="HAMAP-Rule" id="MF_00632"/>
    </source>
</evidence>
<feature type="chain" id="PRO_1000130615" description="Nucleotide-binding protein Daci_4781">
    <location>
        <begin position="1"/>
        <end position="161"/>
    </location>
</feature>
<dbReference type="EMBL" id="CP000884">
    <property type="protein sequence ID" value="ABX37410.1"/>
    <property type="molecule type" value="Genomic_DNA"/>
</dbReference>
<dbReference type="RefSeq" id="WP_012206580.1">
    <property type="nucleotide sequence ID" value="NC_010002.1"/>
</dbReference>
<dbReference type="SMR" id="A9BM65"/>
<dbReference type="STRING" id="398578.Daci_4781"/>
<dbReference type="KEGG" id="dac:Daci_4781"/>
<dbReference type="eggNOG" id="COG1666">
    <property type="taxonomic scope" value="Bacteria"/>
</dbReference>
<dbReference type="HOGENOM" id="CLU_099839_1_0_4"/>
<dbReference type="Proteomes" id="UP000000784">
    <property type="component" value="Chromosome"/>
</dbReference>
<dbReference type="GO" id="GO:0005829">
    <property type="term" value="C:cytosol"/>
    <property type="evidence" value="ECO:0007669"/>
    <property type="project" value="TreeGrafter"/>
</dbReference>
<dbReference type="GO" id="GO:0000166">
    <property type="term" value="F:nucleotide binding"/>
    <property type="evidence" value="ECO:0007669"/>
    <property type="project" value="TreeGrafter"/>
</dbReference>
<dbReference type="CDD" id="cd11740">
    <property type="entry name" value="YajQ_like"/>
    <property type="match status" value="1"/>
</dbReference>
<dbReference type="Gene3D" id="3.30.70.860">
    <property type="match status" value="1"/>
</dbReference>
<dbReference type="Gene3D" id="3.30.70.990">
    <property type="entry name" value="YajQ-like, domain 2"/>
    <property type="match status" value="1"/>
</dbReference>
<dbReference type="HAMAP" id="MF_00632">
    <property type="entry name" value="YajQ"/>
    <property type="match status" value="1"/>
</dbReference>
<dbReference type="InterPro" id="IPR007551">
    <property type="entry name" value="DUF520"/>
</dbReference>
<dbReference type="InterPro" id="IPR035571">
    <property type="entry name" value="UPF0234-like_C"/>
</dbReference>
<dbReference type="InterPro" id="IPR035570">
    <property type="entry name" value="UPF0234_N"/>
</dbReference>
<dbReference type="InterPro" id="IPR036183">
    <property type="entry name" value="YajQ-like_sf"/>
</dbReference>
<dbReference type="NCBIfam" id="NF003819">
    <property type="entry name" value="PRK05412.1"/>
    <property type="match status" value="1"/>
</dbReference>
<dbReference type="PANTHER" id="PTHR30476">
    <property type="entry name" value="UPF0234 PROTEIN YAJQ"/>
    <property type="match status" value="1"/>
</dbReference>
<dbReference type="PANTHER" id="PTHR30476:SF0">
    <property type="entry name" value="UPF0234 PROTEIN YAJQ"/>
    <property type="match status" value="1"/>
</dbReference>
<dbReference type="Pfam" id="PF04461">
    <property type="entry name" value="DUF520"/>
    <property type="match status" value="1"/>
</dbReference>
<dbReference type="SUPFAM" id="SSF89963">
    <property type="entry name" value="YajQ-like"/>
    <property type="match status" value="2"/>
</dbReference>
<sequence length="161" mass="17993">MPSFDTVCEADFVEVKNAVENTAKEIGTRFDFKGTSAAIELKDKEITLFGDADFQLQQVEDILRNKLTKRSVDVRFLDIQKAQKIGGDKLKQTIKVKNGIEAELGKKLQKLIKDSKLKVQAAIQGDAVRVTGAKRDDLQAAMALIRKDLADHPLSFNNFRD</sequence>
<proteinExistence type="inferred from homology"/>